<comment type="similarity">
    <text evidence="1">Belongs to the bacterial ribosomal protein bL27 family.</text>
</comment>
<keyword id="KW-0687">Ribonucleoprotein</keyword>
<keyword id="KW-0689">Ribosomal protein</keyword>
<dbReference type="EMBL" id="CP001050">
    <property type="protein sequence ID" value="ACF30674.1"/>
    <property type="molecule type" value="Genomic_DNA"/>
</dbReference>
<dbReference type="RefSeq" id="WP_003689821.1">
    <property type="nucleotide sequence ID" value="NC_011035.1"/>
</dbReference>
<dbReference type="SMR" id="B4RNP1"/>
<dbReference type="GeneID" id="86929657"/>
<dbReference type="KEGG" id="ngk:NGK_2065"/>
<dbReference type="HOGENOM" id="CLU_095424_4_1_4"/>
<dbReference type="Proteomes" id="UP000002564">
    <property type="component" value="Chromosome"/>
</dbReference>
<dbReference type="GO" id="GO:0022625">
    <property type="term" value="C:cytosolic large ribosomal subunit"/>
    <property type="evidence" value="ECO:0007669"/>
    <property type="project" value="TreeGrafter"/>
</dbReference>
<dbReference type="GO" id="GO:0003735">
    <property type="term" value="F:structural constituent of ribosome"/>
    <property type="evidence" value="ECO:0007669"/>
    <property type="project" value="InterPro"/>
</dbReference>
<dbReference type="GO" id="GO:0006412">
    <property type="term" value="P:translation"/>
    <property type="evidence" value="ECO:0007669"/>
    <property type="project" value="UniProtKB-UniRule"/>
</dbReference>
<dbReference type="FunFam" id="2.40.50.100:FF:000001">
    <property type="entry name" value="50S ribosomal protein L27"/>
    <property type="match status" value="1"/>
</dbReference>
<dbReference type="Gene3D" id="2.40.50.100">
    <property type="match status" value="1"/>
</dbReference>
<dbReference type="HAMAP" id="MF_00539">
    <property type="entry name" value="Ribosomal_bL27"/>
    <property type="match status" value="1"/>
</dbReference>
<dbReference type="InterPro" id="IPR001684">
    <property type="entry name" value="Ribosomal_bL27"/>
</dbReference>
<dbReference type="InterPro" id="IPR018261">
    <property type="entry name" value="Ribosomal_bL27_CS"/>
</dbReference>
<dbReference type="NCBIfam" id="TIGR00062">
    <property type="entry name" value="L27"/>
    <property type="match status" value="1"/>
</dbReference>
<dbReference type="PANTHER" id="PTHR15893:SF0">
    <property type="entry name" value="LARGE RIBOSOMAL SUBUNIT PROTEIN BL27M"/>
    <property type="match status" value="1"/>
</dbReference>
<dbReference type="PANTHER" id="PTHR15893">
    <property type="entry name" value="RIBOSOMAL PROTEIN L27"/>
    <property type="match status" value="1"/>
</dbReference>
<dbReference type="Pfam" id="PF01016">
    <property type="entry name" value="Ribosomal_L27"/>
    <property type="match status" value="1"/>
</dbReference>
<dbReference type="PRINTS" id="PR00063">
    <property type="entry name" value="RIBOSOMALL27"/>
</dbReference>
<dbReference type="SUPFAM" id="SSF110324">
    <property type="entry name" value="Ribosomal L27 protein-like"/>
    <property type="match status" value="1"/>
</dbReference>
<dbReference type="PROSITE" id="PS00831">
    <property type="entry name" value="RIBOSOMAL_L27"/>
    <property type="match status" value="1"/>
</dbReference>
<protein>
    <recommendedName>
        <fullName evidence="1">Large ribosomal subunit protein bL27</fullName>
    </recommendedName>
    <alternativeName>
        <fullName evidence="3">50S ribosomal protein L27</fullName>
    </alternativeName>
</protein>
<feature type="chain" id="PRO_1000128779" description="Large ribosomal subunit protein bL27">
    <location>
        <begin position="1"/>
        <end position="90"/>
    </location>
</feature>
<feature type="region of interest" description="Disordered" evidence="2">
    <location>
        <begin position="1"/>
        <end position="21"/>
    </location>
</feature>
<reference key="1">
    <citation type="journal article" date="2008" name="J. Bacteriol.">
        <title>Complete genome sequence of Neisseria gonorrhoeae NCCP11945.</title>
        <authorList>
            <person name="Chung G.T."/>
            <person name="Yoo J.S."/>
            <person name="Oh H.B."/>
            <person name="Lee Y.S."/>
            <person name="Cha S.H."/>
            <person name="Kim S.J."/>
            <person name="Yoo C.K."/>
        </authorList>
    </citation>
    <scope>NUCLEOTIDE SEQUENCE [LARGE SCALE GENOMIC DNA]</scope>
    <source>
        <strain>NCCP11945</strain>
    </source>
</reference>
<organism>
    <name type="scientific">Neisseria gonorrhoeae (strain NCCP11945)</name>
    <dbReference type="NCBI Taxonomy" id="521006"/>
    <lineage>
        <taxon>Bacteria</taxon>
        <taxon>Pseudomonadati</taxon>
        <taxon>Pseudomonadota</taxon>
        <taxon>Betaproteobacteria</taxon>
        <taxon>Neisseriales</taxon>
        <taxon>Neisseriaceae</taxon>
        <taxon>Neisseria</taxon>
    </lineage>
</organism>
<sequence>MASKKAGGSTRNGRDSEAKRLGVKAYGNELIPAGSIIVRQRGTKFHAGDNVGMGKDHTLFAKIDGYVEFKTKGALNRKTVSIRPYTGSEE</sequence>
<proteinExistence type="inferred from homology"/>
<name>RL27_NEIG2</name>
<gene>
    <name evidence="1" type="primary">rpmA</name>
    <name type="ordered locus">NGK_2065</name>
</gene>
<accession>B4RNP1</accession>
<evidence type="ECO:0000255" key="1">
    <source>
        <dbReference type="HAMAP-Rule" id="MF_00539"/>
    </source>
</evidence>
<evidence type="ECO:0000256" key="2">
    <source>
        <dbReference type="SAM" id="MobiDB-lite"/>
    </source>
</evidence>
<evidence type="ECO:0000305" key="3"/>